<keyword id="KW-0963">Cytoplasm</keyword>
<keyword id="KW-0240">DNA-directed RNA polymerase</keyword>
<keyword id="KW-0548">Nucleotidyltransferase</keyword>
<keyword id="KW-0804">Transcription</keyword>
<keyword id="KW-0808">Transferase</keyword>
<comment type="function">
    <text evidence="1">DNA-dependent RNA polymerase (RNAP) catalyzes the transcription of DNA into RNA using the four ribonucleoside triphosphates as substrates.</text>
</comment>
<comment type="catalytic activity">
    <reaction evidence="1">
        <text>RNA(n) + a ribonucleoside 5'-triphosphate = RNA(n+1) + diphosphate</text>
        <dbReference type="Rhea" id="RHEA:21248"/>
        <dbReference type="Rhea" id="RHEA-COMP:14527"/>
        <dbReference type="Rhea" id="RHEA-COMP:17342"/>
        <dbReference type="ChEBI" id="CHEBI:33019"/>
        <dbReference type="ChEBI" id="CHEBI:61557"/>
        <dbReference type="ChEBI" id="CHEBI:140395"/>
        <dbReference type="EC" id="2.7.7.6"/>
    </reaction>
</comment>
<comment type="subunit">
    <text evidence="1">Part of the RNA polymerase complex.</text>
</comment>
<comment type="subcellular location">
    <subcellularLocation>
        <location evidence="1">Cytoplasm</location>
    </subcellularLocation>
</comment>
<comment type="similarity">
    <text evidence="1">Belongs to the archaeal Rpo5/eukaryotic RPB5 RNA polymerase subunit family.</text>
</comment>
<proteinExistence type="inferred from homology"/>
<gene>
    <name evidence="1" type="primary">rpo5</name>
    <name evidence="1" type="synonym">rpoH</name>
    <name type="ordered locus">TON_0216</name>
</gene>
<evidence type="ECO:0000255" key="1">
    <source>
        <dbReference type="HAMAP-Rule" id="MF_00025"/>
    </source>
</evidence>
<organism>
    <name type="scientific">Thermococcus onnurineus (strain NA1)</name>
    <dbReference type="NCBI Taxonomy" id="523850"/>
    <lineage>
        <taxon>Archaea</taxon>
        <taxon>Methanobacteriati</taxon>
        <taxon>Methanobacteriota</taxon>
        <taxon>Thermococci</taxon>
        <taxon>Thermococcales</taxon>
        <taxon>Thermococcaceae</taxon>
        <taxon>Thermococcus</taxon>
    </lineage>
</organism>
<reference key="1">
    <citation type="journal article" date="2008" name="J. Bacteriol.">
        <title>The complete genome sequence of Thermococcus onnurineus NA1 reveals a mixed heterotrophic and carboxydotrophic metabolism.</title>
        <authorList>
            <person name="Lee H.S."/>
            <person name="Kang S.G."/>
            <person name="Bae S.S."/>
            <person name="Lim J.K."/>
            <person name="Cho Y."/>
            <person name="Kim Y.J."/>
            <person name="Jeon J.H."/>
            <person name="Cha S.-S."/>
            <person name="Kwon K.K."/>
            <person name="Kim H.-T."/>
            <person name="Park C.-J."/>
            <person name="Lee H.-W."/>
            <person name="Kim S.I."/>
            <person name="Chun J."/>
            <person name="Colwell R.R."/>
            <person name="Kim S.-J."/>
            <person name="Lee J.-H."/>
        </authorList>
    </citation>
    <scope>NUCLEOTIDE SEQUENCE [LARGE SCALE GENOMIC DNA]</scope>
    <source>
        <strain>NA1</strain>
    </source>
</reference>
<feature type="chain" id="PRO_1000090211" description="DNA-directed RNA polymerase subunit Rpo5">
    <location>
        <begin position="1"/>
        <end position="82"/>
    </location>
</feature>
<protein>
    <recommendedName>
        <fullName evidence="1">DNA-directed RNA polymerase subunit Rpo5</fullName>
        <ecNumber evidence="1">2.7.7.6</ecNumber>
    </recommendedName>
    <alternativeName>
        <fullName evidence="1">DNA-directed RNA polymerase subunit H</fullName>
    </alternativeName>
</protein>
<dbReference type="EC" id="2.7.7.6" evidence="1"/>
<dbReference type="EMBL" id="CP000855">
    <property type="protein sequence ID" value="ACJ15701.1"/>
    <property type="molecule type" value="Genomic_DNA"/>
</dbReference>
<dbReference type="RefSeq" id="WP_012571174.1">
    <property type="nucleotide sequence ID" value="NC_011529.1"/>
</dbReference>
<dbReference type="SMR" id="B6YT14"/>
<dbReference type="STRING" id="523850.TON_0216"/>
<dbReference type="GeneID" id="7017876"/>
<dbReference type="KEGG" id="ton:TON_0216"/>
<dbReference type="PATRIC" id="fig|523850.10.peg.218"/>
<dbReference type="eggNOG" id="arCOG04258">
    <property type="taxonomic scope" value="Archaea"/>
</dbReference>
<dbReference type="HOGENOM" id="CLU_058320_4_0_2"/>
<dbReference type="OrthoDB" id="30537at2157"/>
<dbReference type="Proteomes" id="UP000002727">
    <property type="component" value="Chromosome"/>
</dbReference>
<dbReference type="GO" id="GO:0005737">
    <property type="term" value="C:cytoplasm"/>
    <property type="evidence" value="ECO:0007669"/>
    <property type="project" value="UniProtKB-SubCell"/>
</dbReference>
<dbReference type="GO" id="GO:0000428">
    <property type="term" value="C:DNA-directed RNA polymerase complex"/>
    <property type="evidence" value="ECO:0007669"/>
    <property type="project" value="UniProtKB-KW"/>
</dbReference>
<dbReference type="GO" id="GO:0003677">
    <property type="term" value="F:DNA binding"/>
    <property type="evidence" value="ECO:0007669"/>
    <property type="project" value="InterPro"/>
</dbReference>
<dbReference type="GO" id="GO:0003899">
    <property type="term" value="F:DNA-directed RNA polymerase activity"/>
    <property type="evidence" value="ECO:0007669"/>
    <property type="project" value="UniProtKB-UniRule"/>
</dbReference>
<dbReference type="GO" id="GO:0006366">
    <property type="term" value="P:transcription by RNA polymerase II"/>
    <property type="evidence" value="ECO:0007669"/>
    <property type="project" value="TreeGrafter"/>
</dbReference>
<dbReference type="GO" id="GO:0006362">
    <property type="term" value="P:transcription elongation by RNA polymerase I"/>
    <property type="evidence" value="ECO:0007669"/>
    <property type="project" value="TreeGrafter"/>
</dbReference>
<dbReference type="GO" id="GO:0042797">
    <property type="term" value="P:tRNA transcription by RNA polymerase III"/>
    <property type="evidence" value="ECO:0007669"/>
    <property type="project" value="TreeGrafter"/>
</dbReference>
<dbReference type="FunFam" id="3.90.940.20:FF:000001">
    <property type="entry name" value="DNA-directed RNA polymerases I, II, and III subunit RPABC1"/>
    <property type="match status" value="1"/>
</dbReference>
<dbReference type="Gene3D" id="3.90.940.20">
    <property type="entry name" value="RPB5-like RNA polymerase subunit"/>
    <property type="match status" value="1"/>
</dbReference>
<dbReference type="HAMAP" id="MF_00025">
    <property type="entry name" value="RNApol_Rpo5_RPB5"/>
    <property type="match status" value="1"/>
</dbReference>
<dbReference type="InterPro" id="IPR014381">
    <property type="entry name" value="Arch_Rpo5/euc_Rpb5"/>
</dbReference>
<dbReference type="InterPro" id="IPR000783">
    <property type="entry name" value="RNA_pol_subH/Rpb5_C"/>
</dbReference>
<dbReference type="InterPro" id="IPR020608">
    <property type="entry name" value="RNA_pol_subH/Rpb5_CS"/>
</dbReference>
<dbReference type="InterPro" id="IPR035913">
    <property type="entry name" value="RPB5-like_sf"/>
</dbReference>
<dbReference type="NCBIfam" id="NF007129">
    <property type="entry name" value="PRK09570.1"/>
    <property type="match status" value="1"/>
</dbReference>
<dbReference type="PANTHER" id="PTHR10535">
    <property type="entry name" value="DNA-DIRECTED RNA POLYMERASES I, II, AND III SUBUNIT RPABC1"/>
    <property type="match status" value="1"/>
</dbReference>
<dbReference type="PANTHER" id="PTHR10535:SF0">
    <property type="entry name" value="DNA-DIRECTED RNA POLYMERASES I, II, AND III SUBUNIT RPABC1"/>
    <property type="match status" value="1"/>
</dbReference>
<dbReference type="Pfam" id="PF01191">
    <property type="entry name" value="RNA_pol_Rpb5_C"/>
    <property type="match status" value="1"/>
</dbReference>
<dbReference type="SUPFAM" id="SSF55287">
    <property type="entry name" value="RPB5-like RNA polymerase subunit"/>
    <property type="match status" value="1"/>
</dbReference>
<dbReference type="PROSITE" id="PS01110">
    <property type="entry name" value="RNA_POL_H_23KD"/>
    <property type="match status" value="1"/>
</dbReference>
<accession>B6YT14</accession>
<sequence length="82" mass="9523">MAAKKEFDIFTHELVPEHRILSEEEKEELLRKYRIKISQLPQIKASDPAVVALGAKPGDVLEIKRKSPTAGYYYYYRLVVED</sequence>
<name>RPO5_THEON</name>